<proteinExistence type="inferred from homology"/>
<feature type="chain" id="PRO_0000264836" description="DNA repair protein RecO">
    <location>
        <begin position="1"/>
        <end position="251"/>
    </location>
</feature>
<keyword id="KW-0227">DNA damage</keyword>
<keyword id="KW-0233">DNA recombination</keyword>
<keyword id="KW-0234">DNA repair</keyword>
<keyword id="KW-1185">Reference proteome</keyword>
<comment type="function">
    <text evidence="1">Involved in DNA repair and RecF pathway recombination.</text>
</comment>
<comment type="similarity">
    <text evidence="1">Belongs to the RecO family.</text>
</comment>
<accession>Q21XM3</accession>
<sequence length="251" mass="27835">MATQRISDEPAYVLHRHDWSESSLILEVFTRHHGRIALVAKGVKRPSSSFRPILLPLQLLHVAFGGDAEIRILKAAEWQGGHVMPTGDALMSGLYLNELLLTLLARDDPHTRLFDVYTQVVQVIASGHGEVLQSALRAFELLLLREIGLLPLLDAQTMTLLALDPESRYSLVPEGGLRQTNDADRASLSGAQWVALQQSLVDSAPFTATLRACSEVMTQLKPQLRALLNYHCGVQTLRTRQMMIDLQSLSL</sequence>
<evidence type="ECO:0000255" key="1">
    <source>
        <dbReference type="HAMAP-Rule" id="MF_00201"/>
    </source>
</evidence>
<name>RECO_ALBFT</name>
<gene>
    <name evidence="1" type="primary">recO</name>
    <name type="ordered locus">Rfer_1751</name>
</gene>
<reference key="1">
    <citation type="submission" date="2006-02" db="EMBL/GenBank/DDBJ databases">
        <title>Complete sequence of chromosome of Rhodoferax ferrireducens DSM 15236.</title>
        <authorList>
            <person name="Copeland A."/>
            <person name="Lucas S."/>
            <person name="Lapidus A."/>
            <person name="Barry K."/>
            <person name="Detter J.C."/>
            <person name="Glavina del Rio T."/>
            <person name="Hammon N."/>
            <person name="Israni S."/>
            <person name="Pitluck S."/>
            <person name="Brettin T."/>
            <person name="Bruce D."/>
            <person name="Han C."/>
            <person name="Tapia R."/>
            <person name="Gilna P."/>
            <person name="Kiss H."/>
            <person name="Schmutz J."/>
            <person name="Larimer F."/>
            <person name="Land M."/>
            <person name="Kyrpides N."/>
            <person name="Ivanova N."/>
            <person name="Richardson P."/>
        </authorList>
    </citation>
    <scope>NUCLEOTIDE SEQUENCE [LARGE SCALE GENOMIC DNA]</scope>
    <source>
        <strain>ATCC BAA-621 / DSM 15236 / T118</strain>
    </source>
</reference>
<organism>
    <name type="scientific">Albidiferax ferrireducens (strain ATCC BAA-621 / DSM 15236 / T118)</name>
    <name type="common">Rhodoferax ferrireducens</name>
    <dbReference type="NCBI Taxonomy" id="338969"/>
    <lineage>
        <taxon>Bacteria</taxon>
        <taxon>Pseudomonadati</taxon>
        <taxon>Pseudomonadota</taxon>
        <taxon>Betaproteobacteria</taxon>
        <taxon>Burkholderiales</taxon>
        <taxon>Comamonadaceae</taxon>
        <taxon>Rhodoferax</taxon>
    </lineage>
</organism>
<dbReference type="EMBL" id="CP000267">
    <property type="protein sequence ID" value="ABD69480.1"/>
    <property type="molecule type" value="Genomic_DNA"/>
</dbReference>
<dbReference type="RefSeq" id="WP_011464048.1">
    <property type="nucleotide sequence ID" value="NC_007908.1"/>
</dbReference>
<dbReference type="SMR" id="Q21XM3"/>
<dbReference type="STRING" id="338969.Rfer_1751"/>
<dbReference type="KEGG" id="rfr:Rfer_1751"/>
<dbReference type="eggNOG" id="COG1381">
    <property type="taxonomic scope" value="Bacteria"/>
</dbReference>
<dbReference type="HOGENOM" id="CLU_066645_0_0_4"/>
<dbReference type="OrthoDB" id="9804792at2"/>
<dbReference type="Proteomes" id="UP000008332">
    <property type="component" value="Chromosome"/>
</dbReference>
<dbReference type="GO" id="GO:0043590">
    <property type="term" value="C:bacterial nucleoid"/>
    <property type="evidence" value="ECO:0007669"/>
    <property type="project" value="TreeGrafter"/>
</dbReference>
<dbReference type="GO" id="GO:0006310">
    <property type="term" value="P:DNA recombination"/>
    <property type="evidence" value="ECO:0007669"/>
    <property type="project" value="UniProtKB-UniRule"/>
</dbReference>
<dbReference type="GO" id="GO:0006302">
    <property type="term" value="P:double-strand break repair"/>
    <property type="evidence" value="ECO:0007669"/>
    <property type="project" value="TreeGrafter"/>
</dbReference>
<dbReference type="Gene3D" id="2.40.50.140">
    <property type="entry name" value="Nucleic acid-binding proteins"/>
    <property type="match status" value="1"/>
</dbReference>
<dbReference type="Gene3D" id="1.20.1440.120">
    <property type="entry name" value="Recombination protein O, C-terminal domain"/>
    <property type="match status" value="1"/>
</dbReference>
<dbReference type="HAMAP" id="MF_00201">
    <property type="entry name" value="RecO"/>
    <property type="match status" value="1"/>
</dbReference>
<dbReference type="InterPro" id="IPR037278">
    <property type="entry name" value="ARFGAP/RecO"/>
</dbReference>
<dbReference type="InterPro" id="IPR022572">
    <property type="entry name" value="DNA_rep/recomb_RecO_N"/>
</dbReference>
<dbReference type="InterPro" id="IPR012340">
    <property type="entry name" value="NA-bd_OB-fold"/>
</dbReference>
<dbReference type="InterPro" id="IPR003717">
    <property type="entry name" value="RecO"/>
</dbReference>
<dbReference type="InterPro" id="IPR042242">
    <property type="entry name" value="RecO_C"/>
</dbReference>
<dbReference type="NCBIfam" id="TIGR00613">
    <property type="entry name" value="reco"/>
    <property type="match status" value="1"/>
</dbReference>
<dbReference type="PANTHER" id="PTHR33991">
    <property type="entry name" value="DNA REPAIR PROTEIN RECO"/>
    <property type="match status" value="1"/>
</dbReference>
<dbReference type="PANTHER" id="PTHR33991:SF1">
    <property type="entry name" value="DNA REPAIR PROTEIN RECO"/>
    <property type="match status" value="1"/>
</dbReference>
<dbReference type="Pfam" id="PF02565">
    <property type="entry name" value="RecO_C"/>
    <property type="match status" value="1"/>
</dbReference>
<dbReference type="Pfam" id="PF11967">
    <property type="entry name" value="RecO_N"/>
    <property type="match status" value="1"/>
</dbReference>
<dbReference type="SUPFAM" id="SSF57863">
    <property type="entry name" value="ArfGap/RecO-like zinc finger"/>
    <property type="match status" value="1"/>
</dbReference>
<dbReference type="SUPFAM" id="SSF50249">
    <property type="entry name" value="Nucleic acid-binding proteins"/>
    <property type="match status" value="1"/>
</dbReference>
<protein>
    <recommendedName>
        <fullName evidence="1">DNA repair protein RecO</fullName>
    </recommendedName>
    <alternativeName>
        <fullName evidence="1">Recombination protein O</fullName>
    </alternativeName>
</protein>